<sequence>MNAIWIAVAAVSLLGLAFGAILGYASRRFAVEDDPVVEKIDEILPQSQCGQCGYPGCRPYAEAISCNGEKINRCAPGGEAVMLKIAELLNVEPQPLDGEAQELTPARMVAVIDENNCIGCTKCIQACPVDAIVGATRVMHTVMSDLCTGCNLCVDPCPTHCISLQPVAETPDSWKWDLNTIPVRIIPVEHHA</sequence>
<dbReference type="EC" id="7.-.-.-" evidence="1"/>
<dbReference type="EMBL" id="AE005674">
    <property type="protein sequence ID" value="AAN43235.1"/>
    <property type="molecule type" value="Genomic_DNA"/>
</dbReference>
<dbReference type="EMBL" id="AE014073">
    <property type="protein sequence ID" value="AAP17121.1"/>
    <property type="molecule type" value="Genomic_DNA"/>
</dbReference>
<dbReference type="RefSeq" id="NP_707528.1">
    <property type="nucleotide sequence ID" value="NC_004337.2"/>
</dbReference>
<dbReference type="RefSeq" id="WP_000991815.1">
    <property type="nucleotide sequence ID" value="NZ_WPGW01000065.1"/>
</dbReference>
<dbReference type="STRING" id="198214.SF1653"/>
<dbReference type="PaxDb" id="198214-SF1653"/>
<dbReference type="GeneID" id="1024854"/>
<dbReference type="KEGG" id="sfl:SF1653"/>
<dbReference type="KEGG" id="sfx:S1785"/>
<dbReference type="PATRIC" id="fig|198214.7.peg.1949"/>
<dbReference type="HOGENOM" id="CLU_063448_2_0_6"/>
<dbReference type="Proteomes" id="UP000001006">
    <property type="component" value="Chromosome"/>
</dbReference>
<dbReference type="Proteomes" id="UP000002673">
    <property type="component" value="Chromosome"/>
</dbReference>
<dbReference type="GO" id="GO:0005886">
    <property type="term" value="C:plasma membrane"/>
    <property type="evidence" value="ECO:0007669"/>
    <property type="project" value="UniProtKB-SubCell"/>
</dbReference>
<dbReference type="GO" id="GO:0051539">
    <property type="term" value="F:4 iron, 4 sulfur cluster binding"/>
    <property type="evidence" value="ECO:0007669"/>
    <property type="project" value="UniProtKB-UniRule"/>
</dbReference>
<dbReference type="GO" id="GO:0009055">
    <property type="term" value="F:electron transfer activity"/>
    <property type="evidence" value="ECO:0007669"/>
    <property type="project" value="InterPro"/>
</dbReference>
<dbReference type="GO" id="GO:0046872">
    <property type="term" value="F:metal ion binding"/>
    <property type="evidence" value="ECO:0007669"/>
    <property type="project" value="UniProtKB-KW"/>
</dbReference>
<dbReference type="GO" id="GO:0022900">
    <property type="term" value="P:electron transport chain"/>
    <property type="evidence" value="ECO:0007669"/>
    <property type="project" value="UniProtKB-UniRule"/>
</dbReference>
<dbReference type="FunFam" id="1.10.15.40:FF:000001">
    <property type="entry name" value="Ion-translocating oxidoreductase complex subunit B"/>
    <property type="match status" value="1"/>
</dbReference>
<dbReference type="Gene3D" id="3.30.70.20">
    <property type="match status" value="1"/>
</dbReference>
<dbReference type="Gene3D" id="1.10.15.40">
    <property type="entry name" value="Electron transport complex subunit B, putative Fe-S cluster"/>
    <property type="match status" value="1"/>
</dbReference>
<dbReference type="HAMAP" id="MF_00463">
    <property type="entry name" value="RsxB_RnfB"/>
    <property type="match status" value="1"/>
</dbReference>
<dbReference type="InterPro" id="IPR007202">
    <property type="entry name" value="4Fe-4S_dom"/>
</dbReference>
<dbReference type="InterPro" id="IPR017896">
    <property type="entry name" value="4Fe4S_Fe-S-bd"/>
</dbReference>
<dbReference type="InterPro" id="IPR017900">
    <property type="entry name" value="4Fe4S_Fe_S_CS"/>
</dbReference>
<dbReference type="InterPro" id="IPR050395">
    <property type="entry name" value="4Fe4S_Ferredoxin_RnfB"/>
</dbReference>
<dbReference type="InterPro" id="IPR010207">
    <property type="entry name" value="Elect_transpt_cplx_RnfB/RsxB"/>
</dbReference>
<dbReference type="InterPro" id="IPR016463">
    <property type="entry name" value="RnfB/RsxB_Proteobac"/>
</dbReference>
<dbReference type="NCBIfam" id="NF003475">
    <property type="entry name" value="PRK05113.1"/>
    <property type="match status" value="1"/>
</dbReference>
<dbReference type="NCBIfam" id="TIGR01944">
    <property type="entry name" value="rnfB"/>
    <property type="match status" value="1"/>
</dbReference>
<dbReference type="PANTHER" id="PTHR43560">
    <property type="entry name" value="ION-TRANSLOCATING OXIDOREDUCTASE COMPLEX SUBUNIT B"/>
    <property type="match status" value="1"/>
</dbReference>
<dbReference type="PANTHER" id="PTHR43560:SF1">
    <property type="entry name" value="ION-TRANSLOCATING OXIDOREDUCTASE COMPLEX SUBUNIT B"/>
    <property type="match status" value="1"/>
</dbReference>
<dbReference type="Pfam" id="PF14697">
    <property type="entry name" value="Fer4_21"/>
    <property type="match status" value="1"/>
</dbReference>
<dbReference type="Pfam" id="PF04060">
    <property type="entry name" value="FeS"/>
    <property type="match status" value="1"/>
</dbReference>
<dbReference type="PIRSF" id="PIRSF005784">
    <property type="entry name" value="Elect_transpt_RnfB"/>
    <property type="match status" value="1"/>
</dbReference>
<dbReference type="SUPFAM" id="SSF54862">
    <property type="entry name" value="4Fe-4S ferredoxins"/>
    <property type="match status" value="1"/>
</dbReference>
<dbReference type="PROSITE" id="PS51656">
    <property type="entry name" value="4FE4S"/>
    <property type="match status" value="1"/>
</dbReference>
<dbReference type="PROSITE" id="PS00198">
    <property type="entry name" value="4FE4S_FER_1"/>
    <property type="match status" value="2"/>
</dbReference>
<dbReference type="PROSITE" id="PS51379">
    <property type="entry name" value="4FE4S_FER_2"/>
    <property type="match status" value="2"/>
</dbReference>
<keyword id="KW-0004">4Fe-4S</keyword>
<keyword id="KW-0997">Cell inner membrane</keyword>
<keyword id="KW-1003">Cell membrane</keyword>
<keyword id="KW-0249">Electron transport</keyword>
<keyword id="KW-0408">Iron</keyword>
<keyword id="KW-0411">Iron-sulfur</keyword>
<keyword id="KW-0472">Membrane</keyword>
<keyword id="KW-0479">Metal-binding</keyword>
<keyword id="KW-1185">Reference proteome</keyword>
<keyword id="KW-0677">Repeat</keyword>
<keyword id="KW-1278">Translocase</keyword>
<keyword id="KW-0813">Transport</keyword>
<accession>Q83KY6</accession>
<accession>Q7C1G8</accession>
<name>RSXB_SHIFL</name>
<protein>
    <recommendedName>
        <fullName evidence="1">Ion-translocating oxidoreductase complex subunit B</fullName>
        <ecNumber evidence="1">7.-.-.-</ecNumber>
    </recommendedName>
    <alternativeName>
        <fullName evidence="1">Rsx electron transport complex subunit B</fullName>
    </alternativeName>
</protein>
<feature type="chain" id="PRO_1000013660" description="Ion-translocating oxidoreductase complex subunit B">
    <location>
        <begin position="1"/>
        <end position="192"/>
    </location>
</feature>
<feature type="domain" description="4Fe-4S" evidence="1">
    <location>
        <begin position="32"/>
        <end position="91"/>
    </location>
</feature>
<feature type="domain" description="4Fe-4S ferredoxin-type 1" evidence="1">
    <location>
        <begin position="108"/>
        <end position="137"/>
    </location>
</feature>
<feature type="domain" description="4Fe-4S ferredoxin-type 2" evidence="1">
    <location>
        <begin position="138"/>
        <end position="167"/>
    </location>
</feature>
<feature type="region of interest" description="Hydrophobic" evidence="1">
    <location>
        <begin position="1"/>
        <end position="26"/>
    </location>
</feature>
<feature type="binding site" evidence="1">
    <location>
        <position position="49"/>
    </location>
    <ligand>
        <name>[4Fe-4S] cluster</name>
        <dbReference type="ChEBI" id="CHEBI:49883"/>
        <label>1</label>
    </ligand>
</feature>
<feature type="binding site" evidence="1">
    <location>
        <position position="52"/>
    </location>
    <ligand>
        <name>[4Fe-4S] cluster</name>
        <dbReference type="ChEBI" id="CHEBI:49883"/>
        <label>1</label>
    </ligand>
</feature>
<feature type="binding site" evidence="1">
    <location>
        <position position="57"/>
    </location>
    <ligand>
        <name>[4Fe-4S] cluster</name>
        <dbReference type="ChEBI" id="CHEBI:49883"/>
        <label>1</label>
    </ligand>
</feature>
<feature type="binding site" evidence="1">
    <location>
        <position position="74"/>
    </location>
    <ligand>
        <name>[4Fe-4S] cluster</name>
        <dbReference type="ChEBI" id="CHEBI:49883"/>
        <label>1</label>
    </ligand>
</feature>
<feature type="binding site" evidence="1">
    <location>
        <position position="117"/>
    </location>
    <ligand>
        <name>[4Fe-4S] cluster</name>
        <dbReference type="ChEBI" id="CHEBI:49883"/>
        <label>2</label>
    </ligand>
</feature>
<feature type="binding site" evidence="1">
    <location>
        <position position="120"/>
    </location>
    <ligand>
        <name>[4Fe-4S] cluster</name>
        <dbReference type="ChEBI" id="CHEBI:49883"/>
        <label>2</label>
    </ligand>
</feature>
<feature type="binding site" evidence="1">
    <location>
        <position position="123"/>
    </location>
    <ligand>
        <name>[4Fe-4S] cluster</name>
        <dbReference type="ChEBI" id="CHEBI:49883"/>
        <label>2</label>
    </ligand>
</feature>
<feature type="binding site" evidence="1">
    <location>
        <position position="127"/>
    </location>
    <ligand>
        <name>[4Fe-4S] cluster</name>
        <dbReference type="ChEBI" id="CHEBI:49883"/>
        <label>3</label>
    </ligand>
</feature>
<feature type="binding site" evidence="1">
    <location>
        <position position="147"/>
    </location>
    <ligand>
        <name>[4Fe-4S] cluster</name>
        <dbReference type="ChEBI" id="CHEBI:49883"/>
        <label>3</label>
    </ligand>
</feature>
<feature type="binding site" evidence="1">
    <location>
        <position position="150"/>
    </location>
    <ligand>
        <name>[4Fe-4S] cluster</name>
        <dbReference type="ChEBI" id="CHEBI:49883"/>
        <label>3</label>
    </ligand>
</feature>
<feature type="binding site" evidence="1">
    <location>
        <position position="153"/>
    </location>
    <ligand>
        <name>[4Fe-4S] cluster</name>
        <dbReference type="ChEBI" id="CHEBI:49883"/>
        <label>3</label>
    </ligand>
</feature>
<feature type="binding site" evidence="1">
    <location>
        <position position="157"/>
    </location>
    <ligand>
        <name>[4Fe-4S] cluster</name>
        <dbReference type="ChEBI" id="CHEBI:49883"/>
        <label>2</label>
    </ligand>
</feature>
<comment type="function">
    <text evidence="1">Part of a membrane-bound complex that couples electron transfer with translocation of ions across the membrane. Required to maintain the reduced state of SoxR.</text>
</comment>
<comment type="cofactor">
    <cofactor evidence="1">
        <name>[4Fe-4S] cluster</name>
        <dbReference type="ChEBI" id="CHEBI:49883"/>
    </cofactor>
    <text evidence="1">Binds 3 [4Fe-4S] clusters.</text>
</comment>
<comment type="subunit">
    <text evidence="1">The complex is composed of six subunits: RsxA, RsxB, RsxC, RsxD, RsxE and RsxG.</text>
</comment>
<comment type="subcellular location">
    <subcellularLocation>
        <location evidence="1">Cell inner membrane</location>
    </subcellularLocation>
</comment>
<comment type="similarity">
    <text evidence="1">Belongs to the 4Fe4S bacterial-type ferredoxin family. RnfB subfamily.</text>
</comment>
<gene>
    <name evidence="1" type="primary">rsxB</name>
    <name type="ordered locus">SF1653</name>
    <name type="ordered locus">S1785</name>
</gene>
<proteinExistence type="inferred from homology"/>
<reference key="1">
    <citation type="journal article" date="2002" name="Nucleic Acids Res.">
        <title>Genome sequence of Shigella flexneri 2a: insights into pathogenicity through comparison with genomes of Escherichia coli K12 and O157.</title>
        <authorList>
            <person name="Jin Q."/>
            <person name="Yuan Z."/>
            <person name="Xu J."/>
            <person name="Wang Y."/>
            <person name="Shen Y."/>
            <person name="Lu W."/>
            <person name="Wang J."/>
            <person name="Liu H."/>
            <person name="Yang J."/>
            <person name="Yang F."/>
            <person name="Zhang X."/>
            <person name="Zhang J."/>
            <person name="Yang G."/>
            <person name="Wu H."/>
            <person name="Qu D."/>
            <person name="Dong J."/>
            <person name="Sun L."/>
            <person name="Xue Y."/>
            <person name="Zhao A."/>
            <person name="Gao Y."/>
            <person name="Zhu J."/>
            <person name="Kan B."/>
            <person name="Ding K."/>
            <person name="Chen S."/>
            <person name="Cheng H."/>
            <person name="Yao Z."/>
            <person name="He B."/>
            <person name="Chen R."/>
            <person name="Ma D."/>
            <person name="Qiang B."/>
            <person name="Wen Y."/>
            <person name="Hou Y."/>
            <person name="Yu J."/>
        </authorList>
    </citation>
    <scope>NUCLEOTIDE SEQUENCE [LARGE SCALE GENOMIC DNA]</scope>
    <source>
        <strain>301 / Serotype 2a</strain>
    </source>
</reference>
<reference key="2">
    <citation type="journal article" date="2003" name="Infect. Immun.">
        <title>Complete genome sequence and comparative genomics of Shigella flexneri serotype 2a strain 2457T.</title>
        <authorList>
            <person name="Wei J."/>
            <person name="Goldberg M.B."/>
            <person name="Burland V."/>
            <person name="Venkatesan M.M."/>
            <person name="Deng W."/>
            <person name="Fournier G."/>
            <person name="Mayhew G.F."/>
            <person name="Plunkett G. III"/>
            <person name="Rose D.J."/>
            <person name="Darling A."/>
            <person name="Mau B."/>
            <person name="Perna N.T."/>
            <person name="Payne S.M."/>
            <person name="Runyen-Janecky L.J."/>
            <person name="Zhou S."/>
            <person name="Schwartz D.C."/>
            <person name="Blattner F.R."/>
        </authorList>
    </citation>
    <scope>NUCLEOTIDE SEQUENCE [LARGE SCALE GENOMIC DNA]</scope>
    <source>
        <strain>ATCC 700930 / 2457T / Serotype 2a</strain>
    </source>
</reference>
<organism>
    <name type="scientific">Shigella flexneri</name>
    <dbReference type="NCBI Taxonomy" id="623"/>
    <lineage>
        <taxon>Bacteria</taxon>
        <taxon>Pseudomonadati</taxon>
        <taxon>Pseudomonadota</taxon>
        <taxon>Gammaproteobacteria</taxon>
        <taxon>Enterobacterales</taxon>
        <taxon>Enterobacteriaceae</taxon>
        <taxon>Shigella</taxon>
    </lineage>
</organism>
<evidence type="ECO:0000255" key="1">
    <source>
        <dbReference type="HAMAP-Rule" id="MF_00463"/>
    </source>
</evidence>